<gene>
    <name type="primary">gto2</name>
    <name type="ORF">SPCC1281.07c</name>
</gene>
<protein>
    <recommendedName>
        <fullName>Glutathione S-transferase omega-like 2</fullName>
        <ecNumber>2.5.1.18</ecNumber>
    </recommendedName>
    <alternativeName>
        <fullName>Glutathione-dependent dehydroascorbate reductase</fullName>
        <ecNumber>1.8.5.1</ecNumber>
    </alternativeName>
</protein>
<keyword id="KW-0961">Cell wall biogenesis/degradation</keyword>
<keyword id="KW-0963">Cytoplasm</keyword>
<keyword id="KW-0333">Golgi apparatus</keyword>
<keyword id="KW-0539">Nucleus</keyword>
<keyword id="KW-0560">Oxidoreductase</keyword>
<keyword id="KW-1185">Reference proteome</keyword>
<keyword id="KW-0808">Transferase</keyword>
<comment type="function">
    <text evidence="1">Active as '1-Cys' thiol transferase against beta-hydroxyethyl disulfide (HED), as dehydroascorbate reductase and as dimethylarsinic acid reductase, while not active against the standard GST substrate 1-chloro-2,4-dinitrobenzene (CDNB). May be involved in cell wall organization and biogenesis (By similarity).</text>
</comment>
<comment type="catalytic activity">
    <reaction>
        <text>RX + glutathione = an S-substituted glutathione + a halide anion + H(+)</text>
        <dbReference type="Rhea" id="RHEA:16437"/>
        <dbReference type="ChEBI" id="CHEBI:15378"/>
        <dbReference type="ChEBI" id="CHEBI:16042"/>
        <dbReference type="ChEBI" id="CHEBI:17792"/>
        <dbReference type="ChEBI" id="CHEBI:57925"/>
        <dbReference type="ChEBI" id="CHEBI:90779"/>
        <dbReference type="EC" id="2.5.1.18"/>
    </reaction>
</comment>
<comment type="catalytic activity">
    <reaction>
        <text>L-dehydroascorbate + 2 glutathione = glutathione disulfide + L-ascorbate</text>
        <dbReference type="Rhea" id="RHEA:24424"/>
        <dbReference type="ChEBI" id="CHEBI:38290"/>
        <dbReference type="ChEBI" id="CHEBI:57925"/>
        <dbReference type="ChEBI" id="CHEBI:58297"/>
        <dbReference type="ChEBI" id="CHEBI:58539"/>
        <dbReference type="EC" id="1.8.5.1"/>
    </reaction>
</comment>
<comment type="subcellular location">
    <subcellularLocation>
        <location evidence="2">Cytoplasm</location>
    </subcellularLocation>
    <subcellularLocation>
        <location evidence="2">Nucleus</location>
    </subcellularLocation>
    <subcellularLocation>
        <location evidence="2">Golgi apparatus</location>
    </subcellularLocation>
</comment>
<comment type="similarity">
    <text evidence="3">Belongs to the GST superfamily. Omega family.</text>
</comment>
<feature type="chain" id="PRO_0000343153" description="Glutathione S-transferase omega-like 2">
    <location>
        <begin position="1"/>
        <end position="313"/>
    </location>
</feature>
<feature type="domain" description="GST C-terminal">
    <location>
        <begin position="161"/>
        <end position="289"/>
    </location>
</feature>
<feature type="active site" description="Nucleophile" evidence="1">
    <location>
        <position position="49"/>
    </location>
</feature>
<proteinExistence type="inferred from homology"/>
<evidence type="ECO:0000250" key="1"/>
<evidence type="ECO:0000269" key="2">
    <source>
    </source>
</evidence>
<evidence type="ECO:0000305" key="3"/>
<organism>
    <name type="scientific">Schizosaccharomyces pombe (strain 972 / ATCC 24843)</name>
    <name type="common">Fission yeast</name>
    <dbReference type="NCBI Taxonomy" id="284812"/>
    <lineage>
        <taxon>Eukaryota</taxon>
        <taxon>Fungi</taxon>
        <taxon>Dikarya</taxon>
        <taxon>Ascomycota</taxon>
        <taxon>Taphrinomycotina</taxon>
        <taxon>Schizosaccharomycetes</taxon>
        <taxon>Schizosaccharomycetales</taxon>
        <taxon>Schizosaccharomycetaceae</taxon>
        <taxon>Schizosaccharomyces</taxon>
    </lineage>
</organism>
<reference key="1">
    <citation type="journal article" date="2002" name="Nature">
        <title>The genome sequence of Schizosaccharomyces pombe.</title>
        <authorList>
            <person name="Wood V."/>
            <person name="Gwilliam R."/>
            <person name="Rajandream M.A."/>
            <person name="Lyne M.H."/>
            <person name="Lyne R."/>
            <person name="Stewart A."/>
            <person name="Sgouros J.G."/>
            <person name="Peat N."/>
            <person name="Hayles J."/>
            <person name="Baker S.G."/>
            <person name="Basham D."/>
            <person name="Bowman S."/>
            <person name="Brooks K."/>
            <person name="Brown D."/>
            <person name="Brown S."/>
            <person name="Chillingworth T."/>
            <person name="Churcher C.M."/>
            <person name="Collins M."/>
            <person name="Connor R."/>
            <person name="Cronin A."/>
            <person name="Davis P."/>
            <person name="Feltwell T."/>
            <person name="Fraser A."/>
            <person name="Gentles S."/>
            <person name="Goble A."/>
            <person name="Hamlin N."/>
            <person name="Harris D.E."/>
            <person name="Hidalgo J."/>
            <person name="Hodgson G."/>
            <person name="Holroyd S."/>
            <person name="Hornsby T."/>
            <person name="Howarth S."/>
            <person name="Huckle E.J."/>
            <person name="Hunt S."/>
            <person name="Jagels K."/>
            <person name="James K.D."/>
            <person name="Jones L."/>
            <person name="Jones M."/>
            <person name="Leather S."/>
            <person name="McDonald S."/>
            <person name="McLean J."/>
            <person name="Mooney P."/>
            <person name="Moule S."/>
            <person name="Mungall K.L."/>
            <person name="Murphy L.D."/>
            <person name="Niblett D."/>
            <person name="Odell C."/>
            <person name="Oliver K."/>
            <person name="O'Neil S."/>
            <person name="Pearson D."/>
            <person name="Quail M.A."/>
            <person name="Rabbinowitsch E."/>
            <person name="Rutherford K.M."/>
            <person name="Rutter S."/>
            <person name="Saunders D."/>
            <person name="Seeger K."/>
            <person name="Sharp S."/>
            <person name="Skelton J."/>
            <person name="Simmonds M.N."/>
            <person name="Squares R."/>
            <person name="Squares S."/>
            <person name="Stevens K."/>
            <person name="Taylor K."/>
            <person name="Taylor R.G."/>
            <person name="Tivey A."/>
            <person name="Walsh S.V."/>
            <person name="Warren T."/>
            <person name="Whitehead S."/>
            <person name="Woodward J.R."/>
            <person name="Volckaert G."/>
            <person name="Aert R."/>
            <person name="Robben J."/>
            <person name="Grymonprez B."/>
            <person name="Weltjens I."/>
            <person name="Vanstreels E."/>
            <person name="Rieger M."/>
            <person name="Schaefer M."/>
            <person name="Mueller-Auer S."/>
            <person name="Gabel C."/>
            <person name="Fuchs M."/>
            <person name="Duesterhoeft A."/>
            <person name="Fritzc C."/>
            <person name="Holzer E."/>
            <person name="Moestl D."/>
            <person name="Hilbert H."/>
            <person name="Borzym K."/>
            <person name="Langer I."/>
            <person name="Beck A."/>
            <person name="Lehrach H."/>
            <person name="Reinhardt R."/>
            <person name="Pohl T.M."/>
            <person name="Eger P."/>
            <person name="Zimmermann W."/>
            <person name="Wedler H."/>
            <person name="Wambutt R."/>
            <person name="Purnelle B."/>
            <person name="Goffeau A."/>
            <person name="Cadieu E."/>
            <person name="Dreano S."/>
            <person name="Gloux S."/>
            <person name="Lelaure V."/>
            <person name="Mottier S."/>
            <person name="Galibert F."/>
            <person name="Aves S.J."/>
            <person name="Xiang Z."/>
            <person name="Hunt C."/>
            <person name="Moore K."/>
            <person name="Hurst S.M."/>
            <person name="Lucas M."/>
            <person name="Rochet M."/>
            <person name="Gaillardin C."/>
            <person name="Tallada V.A."/>
            <person name="Garzon A."/>
            <person name="Thode G."/>
            <person name="Daga R.R."/>
            <person name="Cruzado L."/>
            <person name="Jimenez J."/>
            <person name="Sanchez M."/>
            <person name="del Rey F."/>
            <person name="Benito J."/>
            <person name="Dominguez A."/>
            <person name="Revuelta J.L."/>
            <person name="Moreno S."/>
            <person name="Armstrong J."/>
            <person name="Forsburg S.L."/>
            <person name="Cerutti L."/>
            <person name="Lowe T."/>
            <person name="McCombie W.R."/>
            <person name="Paulsen I."/>
            <person name="Potashkin J."/>
            <person name="Shpakovski G.V."/>
            <person name="Ussery D."/>
            <person name="Barrell B.G."/>
            <person name="Nurse P."/>
        </authorList>
    </citation>
    <scope>NUCLEOTIDE SEQUENCE [LARGE SCALE GENOMIC DNA]</scope>
    <source>
        <strain>972 / ATCC 24843</strain>
    </source>
</reference>
<reference key="2">
    <citation type="journal article" date="2006" name="Nat. Biotechnol.">
        <title>ORFeome cloning and global analysis of protein localization in the fission yeast Schizosaccharomyces pombe.</title>
        <authorList>
            <person name="Matsuyama A."/>
            <person name="Arai R."/>
            <person name="Yashiroda Y."/>
            <person name="Shirai A."/>
            <person name="Kamata A."/>
            <person name="Sekido S."/>
            <person name="Kobayashi Y."/>
            <person name="Hashimoto A."/>
            <person name="Hamamoto M."/>
            <person name="Hiraoka Y."/>
            <person name="Horinouchi S."/>
            <person name="Yoshida M."/>
        </authorList>
    </citation>
    <scope>SUBCELLULAR LOCATION [LARGE SCALE ANALYSIS]</scope>
</reference>
<name>GTO2_SCHPO</name>
<dbReference type="EC" id="2.5.1.18"/>
<dbReference type="EC" id="1.8.5.1"/>
<dbReference type="EMBL" id="CU329672">
    <property type="protein sequence ID" value="CAA22828.1"/>
    <property type="molecule type" value="Genomic_DNA"/>
</dbReference>
<dbReference type="PIR" id="T40926">
    <property type="entry name" value="T40926"/>
</dbReference>
<dbReference type="RefSeq" id="NP_588171.1">
    <property type="nucleotide sequence ID" value="NM_001023160.2"/>
</dbReference>
<dbReference type="SMR" id="O94524"/>
<dbReference type="BioGRID" id="275601">
    <property type="interactions" value="11"/>
</dbReference>
<dbReference type="FunCoup" id="O94524">
    <property type="interactions" value="319"/>
</dbReference>
<dbReference type="STRING" id="284812.O94524"/>
<dbReference type="PaxDb" id="4896-SPCC1281.07c.1"/>
<dbReference type="KEGG" id="spo:2539028"/>
<dbReference type="PomBase" id="SPCC1281.07c"/>
<dbReference type="eggNOG" id="KOG2903">
    <property type="taxonomic scope" value="Eukaryota"/>
</dbReference>
<dbReference type="HOGENOM" id="CLU_037263_0_1_1"/>
<dbReference type="InParanoid" id="O94524"/>
<dbReference type="PhylomeDB" id="O94524"/>
<dbReference type="PRO" id="PR:O94524"/>
<dbReference type="Proteomes" id="UP000002485">
    <property type="component" value="Chromosome III"/>
</dbReference>
<dbReference type="GO" id="GO:0005737">
    <property type="term" value="C:cytoplasm"/>
    <property type="evidence" value="ECO:0007005"/>
    <property type="project" value="PomBase"/>
</dbReference>
<dbReference type="GO" id="GO:0005829">
    <property type="term" value="C:cytosol"/>
    <property type="evidence" value="ECO:0007005"/>
    <property type="project" value="PomBase"/>
</dbReference>
<dbReference type="GO" id="GO:0005794">
    <property type="term" value="C:Golgi apparatus"/>
    <property type="evidence" value="ECO:0007005"/>
    <property type="project" value="PomBase"/>
</dbReference>
<dbReference type="GO" id="GO:0005634">
    <property type="term" value="C:nucleus"/>
    <property type="evidence" value="ECO:0007005"/>
    <property type="project" value="PomBase"/>
</dbReference>
<dbReference type="GO" id="GO:0045174">
    <property type="term" value="F:glutathione dehydrogenase (ascorbate) activity"/>
    <property type="evidence" value="ECO:0007669"/>
    <property type="project" value="UniProtKB-EC"/>
</dbReference>
<dbReference type="GO" id="GO:0004364">
    <property type="term" value="F:glutathione transferase activity"/>
    <property type="evidence" value="ECO:0000318"/>
    <property type="project" value="GO_Central"/>
</dbReference>
<dbReference type="GO" id="GO:0071555">
    <property type="term" value="P:cell wall organization"/>
    <property type="evidence" value="ECO:0007669"/>
    <property type="project" value="UniProtKB-KW"/>
</dbReference>
<dbReference type="GO" id="GO:0098869">
    <property type="term" value="P:cellular oxidant detoxification"/>
    <property type="evidence" value="ECO:0000305"/>
    <property type="project" value="PomBase"/>
</dbReference>
<dbReference type="CDD" id="cd03190">
    <property type="entry name" value="GST_C_Omega_like"/>
    <property type="match status" value="1"/>
</dbReference>
<dbReference type="FunFam" id="3.40.30.10:FF:000162">
    <property type="entry name" value="Glutathione S-transferase Gst3"/>
    <property type="match status" value="1"/>
</dbReference>
<dbReference type="FunFam" id="1.20.1050.10:FF:000038">
    <property type="entry name" value="Glutathione S-transferase omega-like 2"/>
    <property type="match status" value="1"/>
</dbReference>
<dbReference type="Gene3D" id="1.20.1050.10">
    <property type="match status" value="1"/>
</dbReference>
<dbReference type="Gene3D" id="3.40.30.10">
    <property type="entry name" value="Glutaredoxin"/>
    <property type="match status" value="1"/>
</dbReference>
<dbReference type="InterPro" id="IPR010987">
    <property type="entry name" value="Glutathione-S-Trfase_C-like"/>
</dbReference>
<dbReference type="InterPro" id="IPR036282">
    <property type="entry name" value="Glutathione-S-Trfase_C_sf"/>
</dbReference>
<dbReference type="InterPro" id="IPR040079">
    <property type="entry name" value="Glutathione_S-Trfase"/>
</dbReference>
<dbReference type="InterPro" id="IPR004045">
    <property type="entry name" value="Glutathione_S-Trfase_N"/>
</dbReference>
<dbReference type="InterPro" id="IPR047047">
    <property type="entry name" value="GST_Omega-like_C"/>
</dbReference>
<dbReference type="InterPro" id="IPR016639">
    <property type="entry name" value="GST_Omega/GSH"/>
</dbReference>
<dbReference type="InterPro" id="IPR036249">
    <property type="entry name" value="Thioredoxin-like_sf"/>
</dbReference>
<dbReference type="PANTHER" id="PTHR32419:SF6">
    <property type="entry name" value="GLUTATHIONE S-TRANSFERASE OMEGA-LIKE 1-RELATED"/>
    <property type="match status" value="1"/>
</dbReference>
<dbReference type="PANTHER" id="PTHR32419">
    <property type="entry name" value="GLUTATHIONYL-HYDROQUINONE REDUCTASE"/>
    <property type="match status" value="1"/>
</dbReference>
<dbReference type="Pfam" id="PF13410">
    <property type="entry name" value="GST_C_2"/>
    <property type="match status" value="1"/>
</dbReference>
<dbReference type="Pfam" id="PF13409">
    <property type="entry name" value="GST_N_2"/>
    <property type="match status" value="1"/>
</dbReference>
<dbReference type="PIRSF" id="PIRSF015753">
    <property type="entry name" value="GST"/>
    <property type="match status" value="1"/>
</dbReference>
<dbReference type="SFLD" id="SFLDS00019">
    <property type="entry name" value="Glutathione_Transferase_(cytos"/>
    <property type="match status" value="1"/>
</dbReference>
<dbReference type="SFLD" id="SFLDG01206">
    <property type="entry name" value="Xi.1"/>
    <property type="match status" value="1"/>
</dbReference>
<dbReference type="SUPFAM" id="SSF47616">
    <property type="entry name" value="GST C-terminal domain-like"/>
    <property type="match status" value="1"/>
</dbReference>
<dbReference type="SUPFAM" id="SSF52833">
    <property type="entry name" value="Thioredoxin-like"/>
    <property type="match status" value="1"/>
</dbReference>
<dbReference type="PROSITE" id="PS50405">
    <property type="entry name" value="GST_CTER"/>
    <property type="match status" value="1"/>
</dbReference>
<dbReference type="PROSITE" id="PS50404">
    <property type="entry name" value="GST_NTER"/>
    <property type="match status" value="1"/>
</dbReference>
<sequence length="313" mass="37056">MSNTHITDWSSKDGEFRRQVSSFRERISPEHKYFQPEKDRYHLYVSYACPWAHRTLIVRKLKGLENVIPVHVVGWLMGPNGWNFDKENDSTGDPLYNSPYLRNLYFRADPNYNMRFTVPVLWDSKYNTIVNNESAEIIRMFNDAFNEVIEDEEKRVVDLYPSSLRTKIDELNDYFYDTVNNGVYKTGFATTAEAYEKNVRVVFQGLDRLEQVLKESKGPFLLGDHLTETDVRLYTTIVRFDPVYVQHFKCNIGTIRHNYPHINQWLKRLYWKHPAFHETTDFKHIKCHYTQSHTQINPLGITPLGPIPNVEYF</sequence>
<accession>O94524</accession>